<sequence length="86" mass="9564">MAETHSLGTKILIKIIRLYQIMISPFIGARCRFVPTCSCYGIEALKTHGLLKGGWLTLKRVLKCHPLNAGGFDPVPPKTNNNDEKK</sequence>
<accession>P44972</accession>
<gene>
    <name type="ordered locus">HI_1000</name>
</gene>
<keyword id="KW-0997">Cell inner membrane</keyword>
<keyword id="KW-1003">Cell membrane</keyword>
<keyword id="KW-0472">Membrane</keyword>
<keyword id="KW-1185">Reference proteome</keyword>
<name>YIDD_HAEIN</name>
<reference key="1">
    <citation type="journal article" date="1995" name="Science">
        <title>Whole-genome random sequencing and assembly of Haemophilus influenzae Rd.</title>
        <authorList>
            <person name="Fleischmann R.D."/>
            <person name="Adams M.D."/>
            <person name="White O."/>
            <person name="Clayton R.A."/>
            <person name="Kirkness E.F."/>
            <person name="Kerlavage A.R."/>
            <person name="Bult C.J."/>
            <person name="Tomb J.-F."/>
            <person name="Dougherty B.A."/>
            <person name="Merrick J.M."/>
            <person name="McKenney K."/>
            <person name="Sutton G.G."/>
            <person name="FitzHugh W."/>
            <person name="Fields C.A."/>
            <person name="Gocayne J.D."/>
            <person name="Scott J.D."/>
            <person name="Shirley R."/>
            <person name="Liu L.-I."/>
            <person name="Glodek A."/>
            <person name="Kelley J.M."/>
            <person name="Weidman J.F."/>
            <person name="Phillips C.A."/>
            <person name="Spriggs T."/>
            <person name="Hedblom E."/>
            <person name="Cotton M.D."/>
            <person name="Utterback T.R."/>
            <person name="Hanna M.C."/>
            <person name="Nguyen D.T."/>
            <person name="Saudek D.M."/>
            <person name="Brandon R.C."/>
            <person name="Fine L.D."/>
            <person name="Fritchman J.L."/>
            <person name="Fuhrmann J.L."/>
            <person name="Geoghagen N.S.M."/>
            <person name="Gnehm C.L."/>
            <person name="McDonald L.A."/>
            <person name="Small K.V."/>
            <person name="Fraser C.M."/>
            <person name="Smith H.O."/>
            <person name="Venter J.C."/>
        </authorList>
    </citation>
    <scope>NUCLEOTIDE SEQUENCE [LARGE SCALE GENOMIC DNA]</scope>
    <source>
        <strain>ATCC 51907 / DSM 11121 / KW20 / Rd</strain>
    </source>
</reference>
<dbReference type="EMBL" id="L42023">
    <property type="protein sequence ID" value="AAC22662.1"/>
    <property type="molecule type" value="Genomic_DNA"/>
</dbReference>
<dbReference type="PIR" id="G64163">
    <property type="entry name" value="G64163"/>
</dbReference>
<dbReference type="RefSeq" id="NP_439162.1">
    <property type="nucleotide sequence ID" value="NC_000907.1"/>
</dbReference>
<dbReference type="STRING" id="71421.HI_1000"/>
<dbReference type="EnsemblBacteria" id="AAC22662">
    <property type="protein sequence ID" value="AAC22662"/>
    <property type="gene ID" value="HI_1000"/>
</dbReference>
<dbReference type="KEGG" id="hin:HI_1000"/>
<dbReference type="PATRIC" id="fig|71421.8.peg.1043"/>
<dbReference type="eggNOG" id="COG0759">
    <property type="taxonomic scope" value="Bacteria"/>
</dbReference>
<dbReference type="HOGENOM" id="CLU_144811_5_2_6"/>
<dbReference type="OrthoDB" id="9801753at2"/>
<dbReference type="PhylomeDB" id="P44972"/>
<dbReference type="BioCyc" id="HINF71421:G1GJ1-1041-MONOMER"/>
<dbReference type="Proteomes" id="UP000000579">
    <property type="component" value="Chromosome"/>
</dbReference>
<dbReference type="GO" id="GO:0005886">
    <property type="term" value="C:plasma membrane"/>
    <property type="evidence" value="ECO:0007669"/>
    <property type="project" value="UniProtKB-SubCell"/>
</dbReference>
<dbReference type="HAMAP" id="MF_00386">
    <property type="entry name" value="UPF0161_YidD"/>
    <property type="match status" value="1"/>
</dbReference>
<dbReference type="InterPro" id="IPR002696">
    <property type="entry name" value="Membr_insert_effic_factor_YidD"/>
</dbReference>
<dbReference type="NCBIfam" id="TIGR00278">
    <property type="entry name" value="membrane protein insertion efficiency factor YidD"/>
    <property type="match status" value="1"/>
</dbReference>
<dbReference type="PANTHER" id="PTHR33383">
    <property type="entry name" value="MEMBRANE PROTEIN INSERTION EFFICIENCY FACTOR-RELATED"/>
    <property type="match status" value="1"/>
</dbReference>
<dbReference type="PANTHER" id="PTHR33383:SF1">
    <property type="entry name" value="MEMBRANE PROTEIN INSERTION EFFICIENCY FACTOR-RELATED"/>
    <property type="match status" value="1"/>
</dbReference>
<dbReference type="Pfam" id="PF01809">
    <property type="entry name" value="YidD"/>
    <property type="match status" value="1"/>
</dbReference>
<dbReference type="SMART" id="SM01234">
    <property type="entry name" value="Haemolytic"/>
    <property type="match status" value="1"/>
</dbReference>
<organism>
    <name type="scientific">Haemophilus influenzae (strain ATCC 51907 / DSM 11121 / KW20 / Rd)</name>
    <dbReference type="NCBI Taxonomy" id="71421"/>
    <lineage>
        <taxon>Bacteria</taxon>
        <taxon>Pseudomonadati</taxon>
        <taxon>Pseudomonadota</taxon>
        <taxon>Gammaproteobacteria</taxon>
        <taxon>Pasteurellales</taxon>
        <taxon>Pasteurellaceae</taxon>
        <taxon>Haemophilus</taxon>
    </lineage>
</organism>
<proteinExistence type="inferred from homology"/>
<protein>
    <recommendedName>
        <fullName evidence="1">Putative membrane protein insertion efficiency factor</fullName>
    </recommendedName>
</protein>
<feature type="chain" id="PRO_0000171828" description="Putative membrane protein insertion efficiency factor">
    <location>
        <begin position="1"/>
        <end position="86"/>
    </location>
</feature>
<evidence type="ECO:0000255" key="1">
    <source>
        <dbReference type="HAMAP-Rule" id="MF_00386"/>
    </source>
</evidence>
<comment type="function">
    <text evidence="1">Could be involved in insertion of integral membrane proteins into the membrane.</text>
</comment>
<comment type="subcellular location">
    <subcellularLocation>
        <location evidence="1">Cell inner membrane</location>
        <topology evidence="1">Peripheral membrane protein</topology>
        <orientation evidence="1">Cytoplasmic side</orientation>
    </subcellularLocation>
</comment>
<comment type="similarity">
    <text evidence="1">Belongs to the UPF0161 family.</text>
</comment>